<feature type="signal peptide" evidence="2">
    <location>
        <begin position="1"/>
        <end position="23"/>
    </location>
</feature>
<feature type="chain" id="PRO_0000355309" description="Snaclec stejaggregin-B subunit beta-1">
    <location>
        <begin position="24"/>
        <end position="146"/>
    </location>
</feature>
<feature type="domain" description="C-type lectin" evidence="3">
    <location>
        <begin position="32"/>
        <end position="143"/>
    </location>
</feature>
<feature type="disulfide bond" evidence="3">
    <location>
        <begin position="25"/>
        <end position="36"/>
    </location>
</feature>
<feature type="disulfide bond" evidence="3">
    <location>
        <begin position="53"/>
        <end position="142"/>
    </location>
</feature>
<feature type="disulfide bond" description="Interchain (with C-102 in alpha chain)" evidence="3">
    <location>
        <position position="98"/>
    </location>
</feature>
<feature type="disulfide bond" evidence="3">
    <location>
        <begin position="119"/>
        <end position="134"/>
    </location>
</feature>
<organism>
    <name type="scientific">Trimeresurus stejnegeri</name>
    <name type="common">Chinese green tree viper</name>
    <name type="synonym">Viridovipera stejnegeri</name>
    <dbReference type="NCBI Taxonomy" id="39682"/>
    <lineage>
        <taxon>Eukaryota</taxon>
        <taxon>Metazoa</taxon>
        <taxon>Chordata</taxon>
        <taxon>Craniata</taxon>
        <taxon>Vertebrata</taxon>
        <taxon>Euteleostomi</taxon>
        <taxon>Lepidosauria</taxon>
        <taxon>Squamata</taxon>
        <taxon>Bifurcata</taxon>
        <taxon>Unidentata</taxon>
        <taxon>Episquamata</taxon>
        <taxon>Toxicofera</taxon>
        <taxon>Serpentes</taxon>
        <taxon>Colubroidea</taxon>
        <taxon>Viperidae</taxon>
        <taxon>Crotalinae</taxon>
        <taxon>Trimeresurus</taxon>
    </lineage>
</organism>
<comment type="function">
    <text evidence="1">Interferes with one step of hemostasis (modulation of platelet aggregation, or coagulation cascade, for example).</text>
</comment>
<comment type="subunit">
    <text evidence="4">Heteromultimer; disulfide-linked.</text>
</comment>
<comment type="subcellular location">
    <subcellularLocation>
        <location evidence="1">Secreted</location>
    </subcellularLocation>
</comment>
<comment type="tissue specificity">
    <text>Expressed by the venom gland.</text>
</comment>
<comment type="similarity">
    <text evidence="4">Belongs to the snaclec family.</text>
</comment>
<evidence type="ECO:0000250" key="1"/>
<evidence type="ECO:0000255" key="2"/>
<evidence type="ECO:0000255" key="3">
    <source>
        <dbReference type="PROSITE-ProRule" id="PRU00040"/>
    </source>
</evidence>
<evidence type="ECO:0000305" key="4"/>
<keyword id="KW-1015">Disulfide bond</keyword>
<keyword id="KW-1199">Hemostasis impairing toxin</keyword>
<keyword id="KW-0964">Secreted</keyword>
<keyword id="KW-0732">Signal</keyword>
<keyword id="KW-0800">Toxin</keyword>
<name>SLBB1_TRIST</name>
<reference key="1">
    <citation type="submission" date="2001-03" db="EMBL/GenBank/DDBJ databases">
        <title>Cloning and characterization of C-type lectins from Trimeresurus stejnegeri venom.</title>
        <authorList>
            <person name="Lee W.-H."/>
            <person name="Liu H."/>
            <person name="Zhang Y."/>
        </authorList>
    </citation>
    <scope>NUCLEOTIDE SEQUENCE [MRNA]</scope>
    <source>
        <tissue>Venom gland</tissue>
    </source>
</reference>
<dbReference type="EMBL" id="AF354916">
    <property type="protein sequence ID" value="AAQ15158.1"/>
    <property type="molecule type" value="mRNA"/>
</dbReference>
<dbReference type="SMR" id="Q71RQ9"/>
<dbReference type="GO" id="GO:0005576">
    <property type="term" value="C:extracellular region"/>
    <property type="evidence" value="ECO:0007669"/>
    <property type="project" value="UniProtKB-SubCell"/>
</dbReference>
<dbReference type="GO" id="GO:0090729">
    <property type="term" value="F:toxin activity"/>
    <property type="evidence" value="ECO:0007669"/>
    <property type="project" value="UniProtKB-KW"/>
</dbReference>
<dbReference type="FunFam" id="3.10.100.10:FF:000087">
    <property type="entry name" value="Snaclec rhodocetin subunit delta"/>
    <property type="match status" value="1"/>
</dbReference>
<dbReference type="Gene3D" id="3.10.100.10">
    <property type="entry name" value="Mannose-Binding Protein A, subunit A"/>
    <property type="match status" value="1"/>
</dbReference>
<dbReference type="InterPro" id="IPR001304">
    <property type="entry name" value="C-type_lectin-like"/>
</dbReference>
<dbReference type="InterPro" id="IPR016186">
    <property type="entry name" value="C-type_lectin-like/link_sf"/>
</dbReference>
<dbReference type="InterPro" id="IPR050111">
    <property type="entry name" value="C-type_lectin/snaclec_domain"/>
</dbReference>
<dbReference type="InterPro" id="IPR016187">
    <property type="entry name" value="CTDL_fold"/>
</dbReference>
<dbReference type="PANTHER" id="PTHR22803">
    <property type="entry name" value="MANNOSE, PHOSPHOLIPASE, LECTIN RECEPTOR RELATED"/>
    <property type="match status" value="1"/>
</dbReference>
<dbReference type="Pfam" id="PF00059">
    <property type="entry name" value="Lectin_C"/>
    <property type="match status" value="1"/>
</dbReference>
<dbReference type="SMART" id="SM00034">
    <property type="entry name" value="CLECT"/>
    <property type="match status" value="1"/>
</dbReference>
<dbReference type="SUPFAM" id="SSF56436">
    <property type="entry name" value="C-type lectin-like"/>
    <property type="match status" value="1"/>
</dbReference>
<dbReference type="PROSITE" id="PS50041">
    <property type="entry name" value="C_TYPE_LECTIN_2"/>
    <property type="match status" value="1"/>
</dbReference>
<sequence>MGRFIFVSFGLLVVFLSLSGTGADCPSDWSSYDLYCYRVFQEKKNWEDAEKFCRQQHTDSHLVSFDSSEEADFVASKTFPVLNYDLVWIGLGSVWNACKLQWSDGTELKYNAWSAESECITSKSIDNQWFTRSCSQTYPFVCKFQA</sequence>
<proteinExistence type="evidence at transcript level"/>
<protein>
    <recommendedName>
        <fullName>Snaclec stejaggregin-B subunit beta-1</fullName>
    </recommendedName>
</protein>
<accession>Q71RQ9</accession>